<accession>Q74B57</accession>
<proteinExistence type="evidence at protein level"/>
<comment type="function">
    <text evidence="2">tRNA nucleotidyltransferase involved in the synthesis of the tRNA CCA terminus. Adds the two cytidine residues to tRNA.</text>
</comment>
<comment type="catalytic activity">
    <reaction evidence="2">
        <text>a tRNA precursor + 2 CTP = a tRNA with a 3' CC end + 2 diphosphate</text>
        <dbReference type="Rhea" id="RHEA:60008"/>
        <dbReference type="Rhea" id="RHEA-COMP:10465"/>
        <dbReference type="Rhea" id="RHEA-COMP:15488"/>
        <dbReference type="ChEBI" id="CHEBI:33019"/>
        <dbReference type="ChEBI" id="CHEBI:37563"/>
        <dbReference type="ChEBI" id="CHEBI:74896"/>
        <dbReference type="ChEBI" id="CHEBI:83069"/>
    </reaction>
    <physiologicalReaction direction="left-to-right" evidence="2">
        <dbReference type="Rhea" id="RHEA:60009"/>
    </physiologicalReaction>
</comment>
<comment type="cofactor">
    <cofactor evidence="1">
        <name>Mg(2+)</name>
        <dbReference type="ChEBI" id="CHEBI:18420"/>
    </cofactor>
</comment>
<comment type="similarity">
    <text evidence="4">Belongs to the tRNA nucleotidyltransferase/poly(A) polymerase family.</text>
</comment>
<organism>
    <name type="scientific">Geobacter sulfurreducens (strain ATCC 51573 / DSM 12127 / PCA)</name>
    <dbReference type="NCBI Taxonomy" id="243231"/>
    <lineage>
        <taxon>Bacteria</taxon>
        <taxon>Pseudomonadati</taxon>
        <taxon>Thermodesulfobacteriota</taxon>
        <taxon>Desulfuromonadia</taxon>
        <taxon>Geobacterales</taxon>
        <taxon>Geobacteraceae</taxon>
        <taxon>Geobacter</taxon>
    </lineage>
</organism>
<evidence type="ECO:0000250" key="1">
    <source>
        <dbReference type="UniProtKB" id="O67911"/>
    </source>
</evidence>
<evidence type="ECO:0000269" key="2">
    <source>
    </source>
</evidence>
<evidence type="ECO:0000303" key="3">
    <source>
    </source>
</evidence>
<evidence type="ECO:0000305" key="4"/>
<evidence type="ECO:0000312" key="5">
    <source>
        <dbReference type="EMBL" id="AAR35560.1"/>
    </source>
</evidence>
<dbReference type="EC" id="2.7.7.-" evidence="2"/>
<dbReference type="EMBL" id="AE017180">
    <property type="protein sequence ID" value="AAR35560.1"/>
    <property type="molecule type" value="Genomic_DNA"/>
</dbReference>
<dbReference type="RefSeq" id="NP_953233.1">
    <property type="nucleotide sequence ID" value="NC_002939.5"/>
</dbReference>
<dbReference type="RefSeq" id="WP_010942824.1">
    <property type="nucleotide sequence ID" value="NC_002939.5"/>
</dbReference>
<dbReference type="SMR" id="Q74B57"/>
<dbReference type="FunCoup" id="Q74B57">
    <property type="interactions" value="247"/>
</dbReference>
<dbReference type="STRING" id="243231.GSU2184"/>
<dbReference type="EnsemblBacteria" id="AAR35560">
    <property type="protein sequence ID" value="AAR35560"/>
    <property type="gene ID" value="GSU2184"/>
</dbReference>
<dbReference type="KEGG" id="gsu:GSU2184"/>
<dbReference type="PATRIC" id="fig|243231.5.peg.2215"/>
<dbReference type="eggNOG" id="COG0617">
    <property type="taxonomic scope" value="Bacteria"/>
</dbReference>
<dbReference type="HOGENOM" id="CLU_015961_6_0_7"/>
<dbReference type="InParanoid" id="Q74B57"/>
<dbReference type="OrthoDB" id="9805698at2"/>
<dbReference type="Proteomes" id="UP000000577">
    <property type="component" value="Chromosome"/>
</dbReference>
<dbReference type="GO" id="GO:0052927">
    <property type="term" value="F:CC tRNA cytidylyltransferase activity"/>
    <property type="evidence" value="ECO:0007669"/>
    <property type="project" value="RHEA"/>
</dbReference>
<dbReference type="GO" id="GO:0160016">
    <property type="term" value="F:CCACCA tRNA nucleotidyltransferase activity"/>
    <property type="evidence" value="ECO:0000318"/>
    <property type="project" value="GO_Central"/>
</dbReference>
<dbReference type="GO" id="GO:0046872">
    <property type="term" value="F:metal ion binding"/>
    <property type="evidence" value="ECO:0007669"/>
    <property type="project" value="UniProtKB-KW"/>
</dbReference>
<dbReference type="GO" id="GO:0000166">
    <property type="term" value="F:nucleotide binding"/>
    <property type="evidence" value="ECO:0007669"/>
    <property type="project" value="UniProtKB-KW"/>
</dbReference>
<dbReference type="GO" id="GO:0000049">
    <property type="term" value="F:tRNA binding"/>
    <property type="evidence" value="ECO:0007669"/>
    <property type="project" value="UniProtKB-KW"/>
</dbReference>
<dbReference type="GO" id="GO:0001680">
    <property type="term" value="P:tRNA 3'-terminal CCA addition"/>
    <property type="evidence" value="ECO:0000318"/>
    <property type="project" value="GO_Central"/>
</dbReference>
<dbReference type="GO" id="GO:0106354">
    <property type="term" value="P:tRNA surveillance"/>
    <property type="evidence" value="ECO:0000318"/>
    <property type="project" value="GO_Central"/>
</dbReference>
<dbReference type="CDD" id="cd05398">
    <property type="entry name" value="NT_ClassII-CCAase"/>
    <property type="match status" value="1"/>
</dbReference>
<dbReference type="Gene3D" id="3.30.460.10">
    <property type="entry name" value="Beta Polymerase, domain 2"/>
    <property type="match status" value="1"/>
</dbReference>
<dbReference type="Gene3D" id="1.10.3090.10">
    <property type="entry name" value="cca-adding enzyme, domain 2"/>
    <property type="match status" value="1"/>
</dbReference>
<dbReference type="InterPro" id="IPR043519">
    <property type="entry name" value="NT_sf"/>
</dbReference>
<dbReference type="InterPro" id="IPR002646">
    <property type="entry name" value="PolA_pol_head_dom"/>
</dbReference>
<dbReference type="InterPro" id="IPR032828">
    <property type="entry name" value="PolyA_RNA-bd"/>
</dbReference>
<dbReference type="InterPro" id="IPR050124">
    <property type="entry name" value="tRNA_CCA-adding_enzyme"/>
</dbReference>
<dbReference type="PANTHER" id="PTHR47545:SF2">
    <property type="entry name" value="CC-ADDING TRNA NUCLEOTIDYLTRANSFERASE"/>
    <property type="match status" value="1"/>
</dbReference>
<dbReference type="PANTHER" id="PTHR47545">
    <property type="entry name" value="MULTIFUNCTIONAL CCA PROTEIN"/>
    <property type="match status" value="1"/>
</dbReference>
<dbReference type="Pfam" id="PF01743">
    <property type="entry name" value="PolyA_pol"/>
    <property type="match status" value="1"/>
</dbReference>
<dbReference type="Pfam" id="PF12627">
    <property type="entry name" value="PolyA_pol_RNAbd"/>
    <property type="match status" value="1"/>
</dbReference>
<dbReference type="SUPFAM" id="SSF81301">
    <property type="entry name" value="Nucleotidyltransferase"/>
    <property type="match status" value="1"/>
</dbReference>
<dbReference type="SUPFAM" id="SSF81891">
    <property type="entry name" value="Poly A polymerase C-terminal region-like"/>
    <property type="match status" value="1"/>
</dbReference>
<protein>
    <recommendedName>
        <fullName evidence="3">CC-adding tRNA nucleotidyltransferase</fullName>
        <shortName evidence="3">C-adding TNT</shortName>
        <ecNumber evidence="2">2.7.7.-</ecNumber>
    </recommendedName>
    <alternativeName>
        <fullName evidence="4">CC-adding enzyme</fullName>
    </alternativeName>
    <alternativeName>
        <fullName evidence="3">NTSFII</fullName>
    </alternativeName>
</protein>
<gene>
    <name evidence="5" type="ordered locus">GSU2184</name>
</gene>
<name>CATNT_GEOSL</name>
<reference key="1">
    <citation type="journal article" date="2003" name="Science">
        <title>Genome of Geobacter sulfurreducens: metal reduction in subsurface environments.</title>
        <authorList>
            <person name="Methe B.A."/>
            <person name="Nelson K.E."/>
            <person name="Eisen J.A."/>
            <person name="Paulsen I.T."/>
            <person name="Nelson W.C."/>
            <person name="Heidelberg J.F."/>
            <person name="Wu D."/>
            <person name="Wu M."/>
            <person name="Ward N.L."/>
            <person name="Beanan M.J."/>
            <person name="Dodson R.J."/>
            <person name="Madupu R."/>
            <person name="Brinkac L.M."/>
            <person name="Daugherty S.C."/>
            <person name="DeBoy R.T."/>
            <person name="Durkin A.S."/>
            <person name="Gwinn M.L."/>
            <person name="Kolonay J.F."/>
            <person name="Sullivan S.A."/>
            <person name="Haft D.H."/>
            <person name="Selengut J."/>
            <person name="Davidsen T.M."/>
            <person name="Zafar N."/>
            <person name="White O."/>
            <person name="Tran B."/>
            <person name="Romero C."/>
            <person name="Forberger H.A."/>
            <person name="Weidman J.F."/>
            <person name="Khouri H.M."/>
            <person name="Feldblyum T.V."/>
            <person name="Utterback T.R."/>
            <person name="Van Aken S.E."/>
            <person name="Lovley D.R."/>
            <person name="Fraser C.M."/>
        </authorList>
    </citation>
    <scope>NUCLEOTIDE SEQUENCE [LARGE SCALE GENOMIC DNA]</scope>
    <source>
        <strain>ATCC 51573 / DSM 12127 / PCA</strain>
    </source>
</reference>
<reference key="2">
    <citation type="journal article" date="2009" name="J. Bacteriol.">
        <title>Geobacter sulfurreducens contains separate C- and A-adding tRNA nucleotidyltransferases and a poly(A) polymerase.</title>
        <authorList>
            <person name="Bralley P."/>
            <person name="Cozad M."/>
            <person name="Jones G.H."/>
        </authorList>
    </citation>
    <scope>FUNCTION</scope>
    <scope>CATALYTIC ACTIVITY</scope>
    <source>
        <strain>ATCC 51573 / DSM 12127 / PCA</strain>
    </source>
</reference>
<keyword id="KW-0460">Magnesium</keyword>
<keyword id="KW-0479">Metal-binding</keyword>
<keyword id="KW-0547">Nucleotide-binding</keyword>
<keyword id="KW-0548">Nucleotidyltransferase</keyword>
<keyword id="KW-1185">Reference proteome</keyword>
<keyword id="KW-0694">RNA-binding</keyword>
<keyword id="KW-0808">Transferase</keyword>
<keyword id="KW-0819">tRNA processing</keyword>
<keyword id="KW-0820">tRNA-binding</keyword>
<feature type="chain" id="PRO_0000447570" description="CC-adding tRNA nucleotidyltransferase">
    <location>
        <begin position="1"/>
        <end position="430"/>
    </location>
</feature>
<feature type="binding site" evidence="1">
    <location>
        <begin position="33"/>
        <end position="36"/>
    </location>
    <ligand>
        <name>CTP</name>
        <dbReference type="ChEBI" id="CHEBI:37563"/>
    </ligand>
</feature>
<feature type="binding site" evidence="1">
    <location>
        <position position="46"/>
    </location>
    <ligand>
        <name>Mg(2+)</name>
        <dbReference type="ChEBI" id="CHEBI:18420"/>
    </ligand>
</feature>
<feature type="binding site" evidence="1">
    <location>
        <position position="48"/>
    </location>
    <ligand>
        <name>Mg(2+)</name>
        <dbReference type="ChEBI" id="CHEBI:18420"/>
    </ligand>
</feature>
<feature type="binding site" evidence="1">
    <location>
        <begin position="108"/>
        <end position="109"/>
    </location>
    <ligand>
        <name>CTP</name>
        <dbReference type="ChEBI" id="CHEBI:37563"/>
    </ligand>
</feature>
<feature type="binding site" evidence="1">
    <location>
        <position position="113"/>
    </location>
    <ligand>
        <name>CTP</name>
        <dbReference type="ChEBI" id="CHEBI:37563"/>
    </ligand>
</feature>
<feature type="binding site" evidence="1">
    <location>
        <begin position="150"/>
        <end position="159"/>
    </location>
    <ligand>
        <name>CTP</name>
        <dbReference type="ChEBI" id="CHEBI:37563"/>
    </ligand>
</feature>
<feature type="binding site" evidence="1">
    <location>
        <position position="190"/>
    </location>
    <ligand>
        <name>CTP</name>
        <dbReference type="ChEBI" id="CHEBI:37563"/>
    </ligand>
</feature>
<sequence>MDHRLLSFISAPLPSLIASLARHGGFGAWFVGGCVRDALLARPSNDIDIVVGPGGEDLPRAVAARIGGSFFPLDEERGHARVVLKGEGASCDFAPLQGGTIAADLALRDFTINALAVSCGSDDLLDPLGGAADLAQRVIRACSAGAFAADPLRIVRAYRFAAHLDFEIHAATLALIPDHAPLLATVAGERIRDELFRMLDLPHAVPYVLKMSCAGVTGAIFGADDLPADTAAGALDRVESLCRDLSAFGTEAEPVRARLRQEVQPGITIRALAKLAAFLNGAGIPAGIASQRLMLGKAATRLLELLCSSARLTWPAPAAAPDPHALFTLFCHREPAGCEQLILPLAEGILPEDRCRHLAAYLTRQHIPRGGRLLLTGDDIMILLGLPPGRQVGEAIELLRAAQSTGEVRTRAEAQRYLAKKQLTTPEPLR</sequence>